<organism>
    <name type="scientific">Bacillus mycoides (strain KBAB4)</name>
    <name type="common">Bacillus weihenstephanensis</name>
    <dbReference type="NCBI Taxonomy" id="315730"/>
    <lineage>
        <taxon>Bacteria</taxon>
        <taxon>Bacillati</taxon>
        <taxon>Bacillota</taxon>
        <taxon>Bacilli</taxon>
        <taxon>Bacillales</taxon>
        <taxon>Bacillaceae</taxon>
        <taxon>Bacillus</taxon>
        <taxon>Bacillus cereus group</taxon>
    </lineage>
</organism>
<proteinExistence type="inferred from homology"/>
<protein>
    <recommendedName>
        <fullName evidence="1">DNA mismatch repair protein MutL</fullName>
    </recommendedName>
</protein>
<accession>A9VS12</accession>
<gene>
    <name evidence="1" type="primary">mutL</name>
    <name type="ordered locus">BcerKBAB4_3539</name>
</gene>
<reference key="1">
    <citation type="journal article" date="2008" name="Chem. Biol. Interact.">
        <title>Extending the Bacillus cereus group genomics to putative food-borne pathogens of different toxicity.</title>
        <authorList>
            <person name="Lapidus A."/>
            <person name="Goltsman E."/>
            <person name="Auger S."/>
            <person name="Galleron N."/>
            <person name="Segurens B."/>
            <person name="Dossat C."/>
            <person name="Land M.L."/>
            <person name="Broussolle V."/>
            <person name="Brillard J."/>
            <person name="Guinebretiere M.-H."/>
            <person name="Sanchis V."/>
            <person name="Nguen-the C."/>
            <person name="Lereclus D."/>
            <person name="Richardson P."/>
            <person name="Wincker P."/>
            <person name="Weissenbach J."/>
            <person name="Ehrlich S.D."/>
            <person name="Sorokin A."/>
        </authorList>
    </citation>
    <scope>NUCLEOTIDE SEQUENCE [LARGE SCALE GENOMIC DNA]</scope>
    <source>
        <strain>KBAB4</strain>
    </source>
</reference>
<feature type="chain" id="PRO_1000096628" description="DNA mismatch repair protein MutL">
    <location>
        <begin position="1"/>
        <end position="644"/>
    </location>
</feature>
<feature type="region of interest" description="Disordered" evidence="2">
    <location>
        <begin position="340"/>
        <end position="425"/>
    </location>
</feature>
<feature type="compositionally biased region" description="Basic and acidic residues" evidence="2">
    <location>
        <begin position="340"/>
        <end position="360"/>
    </location>
</feature>
<feature type="compositionally biased region" description="Low complexity" evidence="2">
    <location>
        <begin position="387"/>
        <end position="400"/>
    </location>
</feature>
<feature type="compositionally biased region" description="Basic and acidic residues" evidence="2">
    <location>
        <begin position="416"/>
        <end position="425"/>
    </location>
</feature>
<dbReference type="EMBL" id="CP000903">
    <property type="protein sequence ID" value="ABY44712.1"/>
    <property type="molecule type" value="Genomic_DNA"/>
</dbReference>
<dbReference type="RefSeq" id="WP_002142841.1">
    <property type="nucleotide sequence ID" value="NC_010184.1"/>
</dbReference>
<dbReference type="SMR" id="A9VS12"/>
<dbReference type="KEGG" id="bwe:BcerKBAB4_3539"/>
<dbReference type="eggNOG" id="COG0323">
    <property type="taxonomic scope" value="Bacteria"/>
</dbReference>
<dbReference type="HOGENOM" id="CLU_004131_4_1_9"/>
<dbReference type="Proteomes" id="UP000002154">
    <property type="component" value="Chromosome"/>
</dbReference>
<dbReference type="GO" id="GO:0032300">
    <property type="term" value="C:mismatch repair complex"/>
    <property type="evidence" value="ECO:0007669"/>
    <property type="project" value="InterPro"/>
</dbReference>
<dbReference type="GO" id="GO:0005524">
    <property type="term" value="F:ATP binding"/>
    <property type="evidence" value="ECO:0007669"/>
    <property type="project" value="InterPro"/>
</dbReference>
<dbReference type="GO" id="GO:0016887">
    <property type="term" value="F:ATP hydrolysis activity"/>
    <property type="evidence" value="ECO:0007669"/>
    <property type="project" value="InterPro"/>
</dbReference>
<dbReference type="GO" id="GO:0140664">
    <property type="term" value="F:ATP-dependent DNA damage sensor activity"/>
    <property type="evidence" value="ECO:0007669"/>
    <property type="project" value="InterPro"/>
</dbReference>
<dbReference type="GO" id="GO:0030983">
    <property type="term" value="F:mismatched DNA binding"/>
    <property type="evidence" value="ECO:0007669"/>
    <property type="project" value="InterPro"/>
</dbReference>
<dbReference type="GO" id="GO:0006298">
    <property type="term" value="P:mismatch repair"/>
    <property type="evidence" value="ECO:0007669"/>
    <property type="project" value="UniProtKB-UniRule"/>
</dbReference>
<dbReference type="CDD" id="cd16926">
    <property type="entry name" value="HATPase_MutL-MLH-PMS-like"/>
    <property type="match status" value="1"/>
</dbReference>
<dbReference type="CDD" id="cd00782">
    <property type="entry name" value="MutL_Trans"/>
    <property type="match status" value="1"/>
</dbReference>
<dbReference type="FunFam" id="3.30.1370.100:FF:000004">
    <property type="entry name" value="DNA mismatch repair endonuclease MutL"/>
    <property type="match status" value="1"/>
</dbReference>
<dbReference type="FunFam" id="3.30.230.10:FF:000036">
    <property type="entry name" value="DNA mismatch repair endonuclease MutL"/>
    <property type="match status" value="1"/>
</dbReference>
<dbReference type="FunFam" id="3.30.565.10:FF:000003">
    <property type="entry name" value="DNA mismatch repair endonuclease MutL"/>
    <property type="match status" value="1"/>
</dbReference>
<dbReference type="Gene3D" id="3.30.230.10">
    <property type="match status" value="1"/>
</dbReference>
<dbReference type="Gene3D" id="3.30.565.10">
    <property type="entry name" value="Histidine kinase-like ATPase, C-terminal domain"/>
    <property type="match status" value="1"/>
</dbReference>
<dbReference type="Gene3D" id="3.30.1540.20">
    <property type="entry name" value="MutL, C-terminal domain, dimerisation subdomain"/>
    <property type="match status" value="1"/>
</dbReference>
<dbReference type="Gene3D" id="3.30.1370.100">
    <property type="entry name" value="MutL, C-terminal domain, regulatory subdomain"/>
    <property type="match status" value="1"/>
</dbReference>
<dbReference type="HAMAP" id="MF_00149">
    <property type="entry name" value="DNA_mis_repair"/>
    <property type="match status" value="1"/>
</dbReference>
<dbReference type="InterPro" id="IPR014762">
    <property type="entry name" value="DNA_mismatch_repair_CS"/>
</dbReference>
<dbReference type="InterPro" id="IPR020667">
    <property type="entry name" value="DNA_mismatch_repair_MutL"/>
</dbReference>
<dbReference type="InterPro" id="IPR013507">
    <property type="entry name" value="DNA_mismatch_S5_2-like"/>
</dbReference>
<dbReference type="InterPro" id="IPR036890">
    <property type="entry name" value="HATPase_C_sf"/>
</dbReference>
<dbReference type="InterPro" id="IPR002099">
    <property type="entry name" value="MutL/Mlh/PMS"/>
</dbReference>
<dbReference type="InterPro" id="IPR038973">
    <property type="entry name" value="MutL/Mlh/Pms-like"/>
</dbReference>
<dbReference type="InterPro" id="IPR014790">
    <property type="entry name" value="MutL_C"/>
</dbReference>
<dbReference type="InterPro" id="IPR042120">
    <property type="entry name" value="MutL_C_dimsub"/>
</dbReference>
<dbReference type="InterPro" id="IPR042121">
    <property type="entry name" value="MutL_C_regsub"/>
</dbReference>
<dbReference type="InterPro" id="IPR037198">
    <property type="entry name" value="MutL_C_sf"/>
</dbReference>
<dbReference type="InterPro" id="IPR020568">
    <property type="entry name" value="Ribosomal_Su5_D2-typ_SF"/>
</dbReference>
<dbReference type="InterPro" id="IPR014721">
    <property type="entry name" value="Ribsml_uS5_D2-typ_fold_subgr"/>
</dbReference>
<dbReference type="NCBIfam" id="TIGR00585">
    <property type="entry name" value="mutl"/>
    <property type="match status" value="1"/>
</dbReference>
<dbReference type="NCBIfam" id="NF000950">
    <property type="entry name" value="PRK00095.1-3"/>
    <property type="match status" value="1"/>
</dbReference>
<dbReference type="PANTHER" id="PTHR10073">
    <property type="entry name" value="DNA MISMATCH REPAIR PROTEIN MLH, PMS, MUTL"/>
    <property type="match status" value="1"/>
</dbReference>
<dbReference type="PANTHER" id="PTHR10073:SF12">
    <property type="entry name" value="DNA MISMATCH REPAIR PROTEIN MLH1"/>
    <property type="match status" value="1"/>
</dbReference>
<dbReference type="Pfam" id="PF01119">
    <property type="entry name" value="DNA_mis_repair"/>
    <property type="match status" value="1"/>
</dbReference>
<dbReference type="Pfam" id="PF13589">
    <property type="entry name" value="HATPase_c_3"/>
    <property type="match status" value="1"/>
</dbReference>
<dbReference type="Pfam" id="PF08676">
    <property type="entry name" value="MutL_C"/>
    <property type="match status" value="1"/>
</dbReference>
<dbReference type="SMART" id="SM01340">
    <property type="entry name" value="DNA_mis_repair"/>
    <property type="match status" value="1"/>
</dbReference>
<dbReference type="SMART" id="SM00853">
    <property type="entry name" value="MutL_C"/>
    <property type="match status" value="1"/>
</dbReference>
<dbReference type="SUPFAM" id="SSF55874">
    <property type="entry name" value="ATPase domain of HSP90 chaperone/DNA topoisomerase II/histidine kinase"/>
    <property type="match status" value="1"/>
</dbReference>
<dbReference type="SUPFAM" id="SSF118116">
    <property type="entry name" value="DNA mismatch repair protein MutL"/>
    <property type="match status" value="1"/>
</dbReference>
<dbReference type="SUPFAM" id="SSF54211">
    <property type="entry name" value="Ribosomal protein S5 domain 2-like"/>
    <property type="match status" value="1"/>
</dbReference>
<dbReference type="PROSITE" id="PS00058">
    <property type="entry name" value="DNA_MISMATCH_REPAIR_1"/>
    <property type="match status" value="1"/>
</dbReference>
<keyword id="KW-0227">DNA damage</keyword>
<keyword id="KW-0234">DNA repair</keyword>
<evidence type="ECO:0000255" key="1">
    <source>
        <dbReference type="HAMAP-Rule" id="MF_00149"/>
    </source>
</evidence>
<evidence type="ECO:0000256" key="2">
    <source>
        <dbReference type="SAM" id="MobiDB-lite"/>
    </source>
</evidence>
<comment type="function">
    <text evidence="1">This protein is involved in the repair of mismatches in DNA. It is required for dam-dependent methyl-directed DNA mismatch repair. May act as a 'molecular matchmaker', a protein that promotes the formation of a stable complex between two or more DNA-binding proteins in an ATP-dependent manner without itself being part of a final effector complex.</text>
</comment>
<comment type="similarity">
    <text evidence="1">Belongs to the DNA mismatch repair MutL/HexB family.</text>
</comment>
<name>MUTL_BACMK</name>
<sequence>MGKIRKLDDQLSNLIAAGEVVERPASVVKELVENSIDANSTSIEIHLEEAGLSKIRIIDNGDGIAEEDCIVAFERHATSKIKDENDLFRIRTLGFRGEALPSIASVSELELITSTGDAPGTHLSIKGGDIIKQEKTASRKGTDITVQNLFFNTPARLKYMKTIHTELGNITDIVYRIAMSHPEVSLKLFHNEKKLLHTSGNGDVRQVLASIYSIQVAKKLIPIEAESLDFTIKGYVTLPEVTRASRNYMSTIVNGRYVRNFVLMKAIQQGYHTLLPIGRYPIGFLSIEMDPMLVDVNVHPAKLEVRFSKEQELLKLIEETLQSAFKKIQLIPDAGVTTKKKEKDESVQEQFKFEHTKPRESSMPNIVLPTGMDEKQEETTTVKQPAQLWQPPKQEWQPPQSLVREEQSWQPSSKPETVREEKEWTSNDDDFELEELEEEVGEIEEIEMNGNDLPPLYPIGQMHGTYIFAQNDNGLYMIDQHAAQERINYEYFRDKVGRVTQEVQELLVPYRIDLSLTEFLRVEEQLEELKKVGLFLEQFGHQSFIVRSHPTWFPKGQETEIIDEMMEQVVKLKKVDIKKLREEAAIMMSCKASIKANQYLTNDQIFALLEELRTTTNPYTCPHGRPILVHHSTYELEKMFKRVM</sequence>